<gene>
    <name evidence="1" type="primary">rbsD</name>
    <name type="ordered locus">Exig_2386</name>
</gene>
<comment type="function">
    <text evidence="1">Catalyzes the interconversion of beta-pyran and beta-furan forms of D-ribose.</text>
</comment>
<comment type="catalytic activity">
    <reaction evidence="1">
        <text>beta-D-ribopyranose = beta-D-ribofuranose</text>
        <dbReference type="Rhea" id="RHEA:25432"/>
        <dbReference type="ChEBI" id="CHEBI:27476"/>
        <dbReference type="ChEBI" id="CHEBI:47002"/>
        <dbReference type="EC" id="5.4.99.62"/>
    </reaction>
</comment>
<comment type="pathway">
    <text evidence="1">Carbohydrate metabolism; D-ribose degradation; D-ribose 5-phosphate from beta-D-ribopyranose: step 1/2.</text>
</comment>
<comment type="subunit">
    <text evidence="1">Homodecamer.</text>
</comment>
<comment type="subcellular location">
    <subcellularLocation>
        <location evidence="1">Cytoplasm</location>
    </subcellularLocation>
</comment>
<comment type="similarity">
    <text evidence="1">Belongs to the RbsD / FucU family. RbsD subfamily.</text>
</comment>
<feature type="chain" id="PRO_0000346205" description="D-ribose pyranase">
    <location>
        <begin position="1"/>
        <end position="129"/>
    </location>
</feature>
<feature type="active site" description="Proton donor" evidence="1">
    <location>
        <position position="20"/>
    </location>
</feature>
<feature type="binding site" evidence="1">
    <location>
        <position position="28"/>
    </location>
    <ligand>
        <name>substrate</name>
    </ligand>
</feature>
<feature type="binding site" evidence="1">
    <location>
        <position position="96"/>
    </location>
    <ligand>
        <name>substrate</name>
    </ligand>
</feature>
<feature type="binding site" evidence="1">
    <location>
        <begin position="118"/>
        <end position="120"/>
    </location>
    <ligand>
        <name>substrate</name>
    </ligand>
</feature>
<evidence type="ECO:0000255" key="1">
    <source>
        <dbReference type="HAMAP-Rule" id="MF_01661"/>
    </source>
</evidence>
<name>RBSD_EXIS2</name>
<sequence length="129" mass="13797">MKRHGILNSQISKVLADLGHTDTIVIADCGLPIPAGVARIDLALELGTPSFVDVVRIVADDMAVEQVTLATEIKAANPVALEAVMKLDVPQDYVSHEAFKELTKQAKVIIRTGEATPYANVILHAGVIF</sequence>
<proteinExistence type="inferred from homology"/>
<protein>
    <recommendedName>
        <fullName evidence="1">D-ribose pyranase</fullName>
        <ecNumber evidence="1">5.4.99.62</ecNumber>
    </recommendedName>
</protein>
<organism>
    <name type="scientific">Exiguobacterium sibiricum (strain DSM 17290 / CCUG 55495 / CIP 109462 / JCM 13490 / 255-15)</name>
    <dbReference type="NCBI Taxonomy" id="262543"/>
    <lineage>
        <taxon>Bacteria</taxon>
        <taxon>Bacillati</taxon>
        <taxon>Bacillota</taxon>
        <taxon>Bacilli</taxon>
        <taxon>Bacillales</taxon>
        <taxon>Bacillales Family XII. Incertae Sedis</taxon>
        <taxon>Exiguobacterium</taxon>
    </lineage>
</organism>
<keyword id="KW-0119">Carbohydrate metabolism</keyword>
<keyword id="KW-0963">Cytoplasm</keyword>
<keyword id="KW-0413">Isomerase</keyword>
<keyword id="KW-1185">Reference proteome</keyword>
<accession>B1YL34</accession>
<reference key="1">
    <citation type="submission" date="2008-04" db="EMBL/GenBank/DDBJ databases">
        <title>Complete sequence of chromosome of Exiguobacterium sibiricum 255-15.</title>
        <authorList>
            <consortium name="US DOE Joint Genome Institute"/>
            <person name="Copeland A."/>
            <person name="Lucas S."/>
            <person name="Lapidus A."/>
            <person name="Glavina del Rio T."/>
            <person name="Dalin E."/>
            <person name="Tice H."/>
            <person name="Bruce D."/>
            <person name="Goodwin L."/>
            <person name="Pitluck S."/>
            <person name="Kiss H."/>
            <person name="Chertkov O."/>
            <person name="Monk C."/>
            <person name="Brettin T."/>
            <person name="Detter J.C."/>
            <person name="Han C."/>
            <person name="Kuske C.R."/>
            <person name="Schmutz J."/>
            <person name="Larimer F."/>
            <person name="Land M."/>
            <person name="Hauser L."/>
            <person name="Kyrpides N."/>
            <person name="Mikhailova N."/>
            <person name="Vishnivetskaya T."/>
            <person name="Rodrigues D.F."/>
            <person name="Gilichinsky D."/>
            <person name="Tiedje J."/>
            <person name="Richardson P."/>
        </authorList>
    </citation>
    <scope>NUCLEOTIDE SEQUENCE [LARGE SCALE GENOMIC DNA]</scope>
    <source>
        <strain>DSM 17290 / CCUG 55495 / CIP 109462 / JCM 13490 / 255-15</strain>
    </source>
</reference>
<dbReference type="EC" id="5.4.99.62" evidence="1"/>
<dbReference type="EMBL" id="CP001022">
    <property type="protein sequence ID" value="ACB61836.1"/>
    <property type="molecule type" value="Genomic_DNA"/>
</dbReference>
<dbReference type="RefSeq" id="WP_012371252.1">
    <property type="nucleotide sequence ID" value="NC_010556.1"/>
</dbReference>
<dbReference type="SMR" id="B1YL34"/>
<dbReference type="STRING" id="262543.Exig_2386"/>
<dbReference type="KEGG" id="esi:Exig_2386"/>
<dbReference type="eggNOG" id="COG1869">
    <property type="taxonomic scope" value="Bacteria"/>
</dbReference>
<dbReference type="HOGENOM" id="CLU_135498_0_0_9"/>
<dbReference type="OrthoDB" id="9805009at2"/>
<dbReference type="UniPathway" id="UPA00916">
    <property type="reaction ID" value="UER00888"/>
</dbReference>
<dbReference type="Proteomes" id="UP000001681">
    <property type="component" value="Chromosome"/>
</dbReference>
<dbReference type="GO" id="GO:0005829">
    <property type="term" value="C:cytosol"/>
    <property type="evidence" value="ECO:0007669"/>
    <property type="project" value="TreeGrafter"/>
</dbReference>
<dbReference type="GO" id="GO:0062193">
    <property type="term" value="F:D-ribose pyranase activity"/>
    <property type="evidence" value="ECO:0007669"/>
    <property type="project" value="UniProtKB-EC"/>
</dbReference>
<dbReference type="GO" id="GO:0016872">
    <property type="term" value="F:intramolecular lyase activity"/>
    <property type="evidence" value="ECO:0007669"/>
    <property type="project" value="UniProtKB-UniRule"/>
</dbReference>
<dbReference type="GO" id="GO:0048029">
    <property type="term" value="F:monosaccharide binding"/>
    <property type="evidence" value="ECO:0007669"/>
    <property type="project" value="InterPro"/>
</dbReference>
<dbReference type="GO" id="GO:0019303">
    <property type="term" value="P:D-ribose catabolic process"/>
    <property type="evidence" value="ECO:0007669"/>
    <property type="project" value="UniProtKB-UniRule"/>
</dbReference>
<dbReference type="Gene3D" id="3.40.1650.10">
    <property type="entry name" value="RbsD-like domain"/>
    <property type="match status" value="1"/>
</dbReference>
<dbReference type="HAMAP" id="MF_01661">
    <property type="entry name" value="D_rib_pyranase"/>
    <property type="match status" value="1"/>
</dbReference>
<dbReference type="InterPro" id="IPR023064">
    <property type="entry name" value="D-ribose_pyranase"/>
</dbReference>
<dbReference type="InterPro" id="IPR023750">
    <property type="entry name" value="RbsD-like_sf"/>
</dbReference>
<dbReference type="InterPro" id="IPR007721">
    <property type="entry name" value="RbsD_FucU"/>
</dbReference>
<dbReference type="NCBIfam" id="NF008761">
    <property type="entry name" value="PRK11797.1"/>
    <property type="match status" value="1"/>
</dbReference>
<dbReference type="PANTHER" id="PTHR37831">
    <property type="entry name" value="D-RIBOSE PYRANASE"/>
    <property type="match status" value="1"/>
</dbReference>
<dbReference type="PANTHER" id="PTHR37831:SF1">
    <property type="entry name" value="D-RIBOSE PYRANASE"/>
    <property type="match status" value="1"/>
</dbReference>
<dbReference type="Pfam" id="PF05025">
    <property type="entry name" value="RbsD_FucU"/>
    <property type="match status" value="1"/>
</dbReference>
<dbReference type="SUPFAM" id="SSF102546">
    <property type="entry name" value="RbsD-like"/>
    <property type="match status" value="1"/>
</dbReference>